<comment type="subcellular location">
    <subcellularLocation>
        <location evidence="1">Secreted</location>
    </subcellularLocation>
</comment>
<comment type="tissue specificity">
    <text evidence="3">Expressed by the venom gland.</text>
</comment>
<comment type="mass spectrometry" mass="5848.48" method="Electrospray" evidence="1"/>
<comment type="similarity">
    <text evidence="2">Belongs to the scolopendra toxin 3 family.</text>
</comment>
<name>STX3_SCOVN</name>
<reference key="1">
    <citation type="journal article" date="2007" name="Toxicon">
        <title>Venomic analyses of Scolopendra viridicornis nigra and Scolopendra angulata (Centipede, Scolopendromorpha): shedding light on venoms from a neglected group.</title>
        <authorList>
            <person name="Rates B."/>
            <person name="Bemquerer M.P."/>
            <person name="Richardson M."/>
            <person name="Borges M.H."/>
            <person name="Morales R.A.V."/>
            <person name="De Lima M.E."/>
            <person name="Pimenta A.M.C."/>
        </authorList>
    </citation>
    <scope>PROTEIN SEQUENCE</scope>
    <scope>MASS SPECTROMETRY</scope>
    <scope>SUBCELLULAR LOCATION</scope>
    <source>
        <tissue>Venom</tissue>
    </source>
</reference>
<proteinExistence type="evidence at protein level"/>
<protein>
    <recommendedName>
        <fullName>Scolopendra 5848.48 Da toxin</fullName>
    </recommendedName>
</protein>
<accession>P0C8C2</accession>
<dbReference type="SMR" id="P0C8C2"/>
<dbReference type="TCDB" id="8.B.44.1.3">
    <property type="family name" value="the centipede spooky toxin (scoloptoxin-15) family"/>
</dbReference>
<dbReference type="GO" id="GO:0005576">
    <property type="term" value="C:extracellular region"/>
    <property type="evidence" value="ECO:0007669"/>
    <property type="project" value="UniProtKB-SubCell"/>
</dbReference>
<dbReference type="GO" id="GO:0090729">
    <property type="term" value="F:toxin activity"/>
    <property type="evidence" value="ECO:0007669"/>
    <property type="project" value="UniProtKB-KW"/>
</dbReference>
<organism>
    <name type="scientific">Scolopendra viridicornis nigra</name>
    <name type="common">Brazilian giant centipede</name>
    <dbReference type="NCBI Taxonomy" id="486497"/>
    <lineage>
        <taxon>Eukaryota</taxon>
        <taxon>Metazoa</taxon>
        <taxon>Ecdysozoa</taxon>
        <taxon>Arthropoda</taxon>
        <taxon>Myriapoda</taxon>
        <taxon>Chilopoda</taxon>
        <taxon>Pleurostigmophora</taxon>
        <taxon>Scolopendromorpha</taxon>
        <taxon>Scolopendridae</taxon>
        <taxon>Scolopendra</taxon>
    </lineage>
</organism>
<evidence type="ECO:0000269" key="1">
    <source>
    </source>
</evidence>
<evidence type="ECO:0000305" key="2"/>
<evidence type="ECO:0000305" key="3">
    <source>
    </source>
</evidence>
<keyword id="KW-0903">Direct protein sequencing</keyword>
<keyword id="KW-0528">Neurotoxin</keyword>
<keyword id="KW-0964">Secreted</keyword>
<keyword id="KW-0800">Toxin</keyword>
<feature type="chain" id="PRO_0000352858" description="Scolopendra 5848.48 Da toxin">
    <location>
        <begin position="1"/>
        <end position="34" status="greater than"/>
    </location>
</feature>
<feature type="non-terminal residue">
    <location>
        <position position="34"/>
    </location>
</feature>
<sequence length="34" mass="3706">EQLIKKDVKHKDKFAKKSECVRAAAAAFTGGDKS</sequence>